<keyword id="KW-0067">ATP-binding</keyword>
<keyword id="KW-0191">Covalent protein-RNA linkage</keyword>
<keyword id="KW-0903">Direct protein sequencing</keyword>
<keyword id="KW-1262">Eukaryotic host gene expression shutoff by virus</keyword>
<keyword id="KW-1193">Eukaryotic host translation shutoff by virus</keyword>
<keyword id="KW-1038">Host endoplasmic reticulum</keyword>
<keyword id="KW-1190">Host gene expression shutoff by virus</keyword>
<keyword id="KW-1043">Host membrane</keyword>
<keyword id="KW-0945">Host-virus interaction</keyword>
<keyword id="KW-0378">Hydrolase</keyword>
<keyword id="KW-0472">Membrane</keyword>
<keyword id="KW-0547">Nucleotide-binding</keyword>
<keyword id="KW-0548">Nucleotidyltransferase</keyword>
<keyword id="KW-0597">Phosphoprotein</keyword>
<keyword id="KW-0645">Protease</keyword>
<keyword id="KW-1185">Reference proteome</keyword>
<keyword id="KW-0696">RNA-directed RNA polymerase</keyword>
<keyword id="KW-0788">Thiol protease</keyword>
<keyword id="KW-0808">Transferase</keyword>
<keyword id="KW-0693">Viral RNA replication</keyword>
<organism>
    <name type="scientific">Feline calicivirus (strain Cat/United States/Urbana/1960)</name>
    <name type="common">FCV</name>
    <dbReference type="NCBI Taxonomy" id="292349"/>
    <lineage>
        <taxon>Viruses</taxon>
        <taxon>Riboviria</taxon>
        <taxon>Orthornavirae</taxon>
        <taxon>Pisuviricota</taxon>
        <taxon>Pisoniviricetes</taxon>
        <taxon>Picornavirales</taxon>
        <taxon>Caliciviridae</taxon>
        <taxon>Vesivirus</taxon>
        <taxon>Feline calicivirus</taxon>
    </lineage>
</organism>
<name>POLG_FCVUR</name>
<reference key="1">
    <citation type="journal article" date="1995" name="Virology">
        <title>RNA transcripts derived from a cloned full-length copy of the feline calicivirus genome do not require VpG for infectivity.</title>
        <authorList>
            <person name="Sosnovtsev S.V."/>
            <person name="Green K.Y."/>
        </authorList>
    </citation>
    <scope>NUCLEOTIDE SEQUENCE [GENOMIC RNA]</scope>
</reference>
<reference key="2">
    <citation type="journal article" date="2002" name="J. Virol.">
        <title>Processing map and essential cleavage sites of the nonstructural polyprotein encoded by ORF1 of the feline calicivirus genome.</title>
        <authorList>
            <person name="Sosnovtsev S.V."/>
            <person name="Garfield M."/>
            <person name="Green K.Y."/>
        </authorList>
    </citation>
    <scope>PROTEIN SEQUENCE OF 686-695</scope>
    <scope>PROTEOLYTIC PROCESSING (GENOME POLYPROTEIN)</scope>
    <scope>MUTAGENESIS OF GLU-46; GLU-331; GLU-683; GLU-685; GLU-960; GLU-1071; GLU-1345 AND GLU-1419</scope>
</reference>
<reference key="3">
    <citation type="journal article" date="1999" name="J. Virol.">
        <title>Mapping of the feline calicivirus proteinase responsible for autocatalytic processing of the nonstructural polyprotein and identification of a stable proteinase-polymerase precursor protein.</title>
        <authorList>
            <person name="Sosnovtseva S.A."/>
            <person name="Sosnovtsev S.V."/>
            <person name="Green K.Y."/>
        </authorList>
    </citation>
    <scope>PROTEIN SEQUENCE OF 961-969 AND 1072-1080</scope>
    <scope>PROTEOLYTIC PROCESSING (GENOME POLYPROTEIN)</scope>
    <scope>MUTAGENESIS OF CYS-1193</scope>
    <scope>FUNCTION (PROTEASE-POLYMERASE P76)</scope>
</reference>
<reference key="4">
    <citation type="journal article" date="2000" name="Virology">
        <title>Identification and genomic mapping of the ORF3 and VPg proteins in feline calicivirus virions.</title>
        <authorList>
            <person name="Sosnovtsev S.V."/>
            <person name="Green K.Y."/>
        </authorList>
    </citation>
    <scope>PROTEIN SEQUENCE OF 961-980</scope>
</reference>
<reference key="5">
    <citation type="journal article" date="2004" name="J. Virol.">
        <title>Calicivirus 3C-like proteinase inhibits cellular translation by cleavage of poly(A)-binding protein.</title>
        <authorList>
            <person name="Kuyumcu-Martinez M."/>
            <person name="Belliot G."/>
            <person name="Sosnovtsev S.V."/>
            <person name="Chang K.O."/>
            <person name="Green K.Y."/>
            <person name="Lloyd R.E."/>
        </authorList>
    </citation>
    <scope>FUNCTION (PROTEASE-POLYMERASE P76)</scope>
</reference>
<reference key="6">
    <citation type="journal article" date="2004" name="J. Gen. Virol.">
        <title>Cleavage of eukaryotic initiation factor eIF4G and inhibition of host-cell protein synthesis during feline calicivirus infection.</title>
        <authorList>
            <person name="Willcocks M.M."/>
            <person name="Carter M.J."/>
            <person name="Roberts L.O."/>
        </authorList>
    </citation>
    <scope>FUNCTION (PROTEASE-POLYMERASE P76)</scope>
</reference>
<reference key="7">
    <citation type="journal article" date="2006" name="J. Gen. Virol.">
        <title>Analysis of protein-protein interactions in the feline calicivirus replication complex.</title>
        <authorList>
            <person name="Kaiser W.J."/>
            <person name="Chaudhry Y."/>
            <person name="Sosnovtsev S.V."/>
            <person name="Goodfellow I.G."/>
        </authorList>
    </citation>
    <scope>INTERACTION WITH NTPASE (PROTEIN P32)</scope>
    <scope>INTERACTION WITH NS4 (NS2)</scope>
    <scope>INTERACTION WITH PROTEASE-POLYMERASE P76 (NS2)</scope>
    <scope>INTERACTION WITH PROTEASE-POLYMERASE P76 (VIRAL GENOME-LINKED PROTEIN)</scope>
    <scope>INTERACTION WITH CAPSID PROTEIN VP1 (VIRAL GENOME-LINKED PROTEIN)</scope>
    <scope>INTERACTION WITH VIRAL GENOME-LINKED PROTEIN (PROTEASE-POLYMERASE P76)</scope>
    <scope>INTERACTION WITH NS2 (PROTEASE-POLYMERASE P76)</scope>
    <scope>INTERACTION WITH CAPSID PROTEIN VP1 (PROTEASE-POLYMERASE P76)</scope>
    <scope>SUBUNIT (NS2)</scope>
    <scope>SUBUNIT (PROTEASE-POLYMERASE P76)</scope>
</reference>
<reference key="8">
    <citation type="journal article" date="2010" name="J. Gen. Virol.">
        <title>Feline calicivirus p32, p39 and p30 proteins localize to the endoplasmic reticulum to initiate replication complex formation.</title>
        <authorList>
            <person name="Bailey D."/>
            <person name="Kaiser W.J."/>
            <person name="Hollinshead M."/>
            <person name="Moffat K."/>
            <person name="Chaudhry Y."/>
            <person name="Wileman T."/>
            <person name="Sosnovtsev S.V."/>
            <person name="Goodfellow I.G."/>
        </authorList>
    </citation>
    <scope>SUBCELLULAR LOCATION (NTPASE)</scope>
    <scope>SUBCELLULAR LOCATION (NS2)</scope>
    <scope>SUBCELLULAR LOCATION (NS4)</scope>
    <scope>FUNCTION (NTPASE)</scope>
    <scope>FUNCTION (NS2)</scope>
    <scope>FUNCTION (NS4)</scope>
</reference>
<reference key="9">
    <citation type="journal article" date="2016" name="J. Virol.">
        <title>Feline Calicivirus Infection Disrupts Assembly of Cytoplasmic Stress Granules and Induces G3BP1 Cleavage.</title>
        <authorList>
            <person name="Humoud M.N."/>
            <person name="Doyle N."/>
            <person name="Royall E."/>
            <person name="Willcocks M.M."/>
            <person name="Sorgeloos F."/>
            <person name="van Kuppeveld F."/>
            <person name="Roberts L.O."/>
            <person name="Goodfellow I.G."/>
            <person name="Langereis M.A."/>
            <person name="Locker N."/>
        </authorList>
    </citation>
    <scope>FUNCTION (PROTEASE-POLYMERASE P76)</scope>
</reference>
<reference key="10">
    <citation type="journal article" date="2021" name="Front. Microbiol.">
        <title>Calicivirus Non-structural Proteins: Potential Functions in Replication and Host Cell Manipulation.</title>
        <authorList>
            <person name="Smertina E."/>
            <person name="Hall R.N."/>
            <person name="Urakova N."/>
            <person name="Strive T."/>
            <person name="Frese M."/>
        </authorList>
    </citation>
    <scope>REVIEW</scope>
</reference>
<accession>Q66914</accession>
<proteinExistence type="evidence at protein level"/>
<dbReference type="EC" id="3.6.1.15" evidence="3"/>
<dbReference type="EC" id="2.7.7.48" evidence="4"/>
<dbReference type="EC" id="3.4.22.66" evidence="5"/>
<dbReference type="EMBL" id="L40021">
    <property type="protein sequence ID" value="AAA79323.1"/>
    <property type="molecule type" value="Genomic_RNA"/>
</dbReference>
<dbReference type="RefSeq" id="NP_783196.1">
    <property type="nucleotide sequence ID" value="NC_001481.2"/>
</dbReference>
<dbReference type="SMR" id="Q66914"/>
<dbReference type="MEROPS" id="C24.002"/>
<dbReference type="KEGG" id="vg:1502252"/>
<dbReference type="BRENDA" id="3.4.22.66">
    <property type="organism ID" value="8732"/>
</dbReference>
<dbReference type="BRENDA" id="3.4.23.B4">
    <property type="organism ID" value="8732"/>
</dbReference>
<dbReference type="Proteomes" id="UP000001098">
    <property type="component" value="Segment"/>
</dbReference>
<dbReference type="GO" id="GO:0044167">
    <property type="term" value="C:host cell endoplasmic reticulum membrane"/>
    <property type="evidence" value="ECO:0007669"/>
    <property type="project" value="UniProtKB-SubCell"/>
</dbReference>
<dbReference type="GO" id="GO:0016020">
    <property type="term" value="C:membrane"/>
    <property type="evidence" value="ECO:0007669"/>
    <property type="project" value="UniProtKB-KW"/>
</dbReference>
<dbReference type="GO" id="GO:0005524">
    <property type="term" value="F:ATP binding"/>
    <property type="evidence" value="ECO:0007669"/>
    <property type="project" value="UniProtKB-KW"/>
</dbReference>
<dbReference type="GO" id="GO:0016887">
    <property type="term" value="F:ATP hydrolysis activity"/>
    <property type="evidence" value="ECO:0007669"/>
    <property type="project" value="InterPro"/>
</dbReference>
<dbReference type="GO" id="GO:0004197">
    <property type="term" value="F:cysteine-type endopeptidase activity"/>
    <property type="evidence" value="ECO:0007669"/>
    <property type="project" value="InterPro"/>
</dbReference>
<dbReference type="GO" id="GO:0003723">
    <property type="term" value="F:RNA binding"/>
    <property type="evidence" value="ECO:0007669"/>
    <property type="project" value="InterPro"/>
</dbReference>
<dbReference type="GO" id="GO:0003724">
    <property type="term" value="F:RNA helicase activity"/>
    <property type="evidence" value="ECO:0007669"/>
    <property type="project" value="InterPro"/>
</dbReference>
<dbReference type="GO" id="GO:0003968">
    <property type="term" value="F:RNA-directed RNA polymerase activity"/>
    <property type="evidence" value="ECO:0007669"/>
    <property type="project" value="UniProtKB-KW"/>
</dbReference>
<dbReference type="GO" id="GO:0006351">
    <property type="term" value="P:DNA-templated transcription"/>
    <property type="evidence" value="ECO:0007669"/>
    <property type="project" value="InterPro"/>
</dbReference>
<dbReference type="GO" id="GO:0006508">
    <property type="term" value="P:proteolysis"/>
    <property type="evidence" value="ECO:0007669"/>
    <property type="project" value="UniProtKB-KW"/>
</dbReference>
<dbReference type="GO" id="GO:0039657">
    <property type="term" value="P:symbiont-mediated suppression of host gene expression"/>
    <property type="evidence" value="ECO:0007669"/>
    <property type="project" value="UniProtKB-KW"/>
</dbReference>
<dbReference type="GO" id="GO:0039694">
    <property type="term" value="P:viral RNA genome replication"/>
    <property type="evidence" value="ECO:0007669"/>
    <property type="project" value="InterPro"/>
</dbReference>
<dbReference type="CDD" id="cd00009">
    <property type="entry name" value="AAA"/>
    <property type="match status" value="1"/>
</dbReference>
<dbReference type="CDD" id="cd23192">
    <property type="entry name" value="Caliciviridae_RdRp"/>
    <property type="match status" value="1"/>
</dbReference>
<dbReference type="Gene3D" id="1.10.260.110">
    <property type="match status" value="1"/>
</dbReference>
<dbReference type="Gene3D" id="1.20.960.20">
    <property type="match status" value="1"/>
</dbReference>
<dbReference type="Gene3D" id="3.30.70.270">
    <property type="match status" value="1"/>
</dbReference>
<dbReference type="Gene3D" id="6.10.140.320">
    <property type="match status" value="1"/>
</dbReference>
<dbReference type="Gene3D" id="6.10.250.3230">
    <property type="match status" value="1"/>
</dbReference>
<dbReference type="Gene3D" id="3.40.50.300">
    <property type="entry name" value="P-loop containing nucleotide triphosphate hydrolases"/>
    <property type="match status" value="1"/>
</dbReference>
<dbReference type="InterPro" id="IPR003593">
    <property type="entry name" value="AAA+_ATPase"/>
</dbReference>
<dbReference type="InterPro" id="IPR043502">
    <property type="entry name" value="DNA/RNA_pol_sf"/>
</dbReference>
<dbReference type="InterPro" id="IPR004004">
    <property type="entry name" value="Helic/Pol/Pept_Calicivir-typ"/>
</dbReference>
<dbReference type="InterPro" id="IPR000605">
    <property type="entry name" value="Helicase_SF3_ssDNA/RNA_vir"/>
</dbReference>
<dbReference type="InterPro" id="IPR014759">
    <property type="entry name" value="Helicase_SF3_ssRNA_vir"/>
</dbReference>
<dbReference type="InterPro" id="IPR027417">
    <property type="entry name" value="P-loop_NTPase"/>
</dbReference>
<dbReference type="InterPro" id="IPR000317">
    <property type="entry name" value="Peptidase_C24"/>
</dbReference>
<dbReference type="InterPro" id="IPR009003">
    <property type="entry name" value="Peptidase_S1_PA"/>
</dbReference>
<dbReference type="InterPro" id="IPR043128">
    <property type="entry name" value="Rev_trsase/Diguanyl_cyclase"/>
</dbReference>
<dbReference type="InterPro" id="IPR001205">
    <property type="entry name" value="RNA-dir_pol_C"/>
</dbReference>
<dbReference type="InterPro" id="IPR007094">
    <property type="entry name" value="RNA-dir_pol_PSvirus"/>
</dbReference>
<dbReference type="InterPro" id="IPR049434">
    <property type="entry name" value="VPg"/>
</dbReference>
<dbReference type="Pfam" id="PF03510">
    <property type="entry name" value="Peptidase_C24"/>
    <property type="match status" value="1"/>
</dbReference>
<dbReference type="Pfam" id="PF00680">
    <property type="entry name" value="RdRP_1"/>
    <property type="match status" value="1"/>
</dbReference>
<dbReference type="Pfam" id="PF00910">
    <property type="entry name" value="RNA_helicase"/>
    <property type="match status" value="1"/>
</dbReference>
<dbReference type="Pfam" id="PF20915">
    <property type="entry name" value="VPg"/>
    <property type="match status" value="1"/>
</dbReference>
<dbReference type="PRINTS" id="PR00916">
    <property type="entry name" value="2CENDOPTASE"/>
</dbReference>
<dbReference type="PRINTS" id="PR00918">
    <property type="entry name" value="CALICVIRUSNS"/>
</dbReference>
<dbReference type="SMART" id="SM00382">
    <property type="entry name" value="AAA"/>
    <property type="match status" value="1"/>
</dbReference>
<dbReference type="SUPFAM" id="SSF56672">
    <property type="entry name" value="DNA/RNA polymerases"/>
    <property type="match status" value="1"/>
</dbReference>
<dbReference type="SUPFAM" id="SSF52540">
    <property type="entry name" value="P-loop containing nucleoside triphosphate hydrolases"/>
    <property type="match status" value="1"/>
</dbReference>
<dbReference type="SUPFAM" id="SSF50494">
    <property type="entry name" value="Trypsin-like serine proteases"/>
    <property type="match status" value="1"/>
</dbReference>
<dbReference type="PROSITE" id="PS51894">
    <property type="entry name" value="CV_3CL_PRO"/>
    <property type="match status" value="1"/>
</dbReference>
<dbReference type="PROSITE" id="PS50507">
    <property type="entry name" value="RDRP_SSRNA_POS"/>
    <property type="match status" value="1"/>
</dbReference>
<dbReference type="PROSITE" id="PS51218">
    <property type="entry name" value="SF3_HELICASE_2"/>
    <property type="match status" value="1"/>
</dbReference>
<gene>
    <name type="ORF">ORF1</name>
</gene>
<comment type="function">
    <molecule>NS2</molecule>
    <text evidence="2 14">Together with NTPase and NS4, initiates the formation of the replication complex (PubMed:19906938). Induces the proliferation of the host smooth ER membranes forming long tubular structures (By similarity). These remodeled membranes probably form the viral factories that contain the replication complex (By similarity).</text>
</comment>
<comment type="function">
    <molecule>NTPase</molecule>
    <text evidence="2 3 14">Displays NTPase activity, but no helicase activity (By similarity). Induces the formation of convoluted membranes derived from the host ER (By similarity). These remodeled membranes probably form the viral factories that contain the replication complex (By similarity). Together with NS2 and NS4, initiates the formation of the replication complex (PubMed:19906938).</text>
</comment>
<comment type="function">
    <molecule>NS4</molecule>
    <text evidence="2 14">Probable key protein responsible for the formation of membrane alterations by the virus (By similarity). Induces the formation of convoluted membranes derived from the host ER (By similarity). These remodeled membranes probably form the viral factories that contain the replication complex (By similarity). Together with NS2 and NTPase, initiates the formation of the replication complex (PubMed:19906938).</text>
</comment>
<comment type="function">
    <molecule>Viral genome-linked protein</molecule>
    <text evidence="1">Viral genome-linked protein is covalently linked to the 5'-end of the positive-strand, negative-strand genomic RNAs and subgenomic RNA. Acts as a genome-linked replication primer. May recruit ribosome to viral RNA thereby promoting viral proteins translation. Interacts with host translation initiation complex to allow the translation of viral proteins.</text>
</comment>
<comment type="function">
    <molecule>Protease-polymerase p76</molecule>
    <text evidence="9 11 12 15 17">Processes the polyprotein: Pro-Pol is first released by autocleavage, then all other proteins are cleaved (PubMed:10400760). Cleaves host translation initiation factor eIF4G1, eIF4G2 and PABP1 thereby inducing a shutdown of host protein synthesis (PubMed:15105529, PubMed:15254188). This shutdown may not prevent viral mRNA from being translated since viral Vpg replaces the cap (Probable). Also functions as an RNA-directed RNA polymerase, which replicates genomic and antigenomic viral RNA by recognizing specific signals (Probable). Transcribes a subgenomic mRNA by initiating RNA synthesis internally on antigenomic RNA (Probable). This sgRNA codes for structural proteins (Probable). Catalyzes the covalent attachment VPg with viral RNAs. Cleaves host G3BP1 thereby preventing the assembly of host stress granules (PubMed:27147742).</text>
</comment>
<comment type="catalytic activity">
    <molecule>NTPase</molecule>
    <reaction evidence="3">
        <text>a ribonucleoside 5'-triphosphate + H2O = a ribonucleoside 5'-diphosphate + phosphate + H(+)</text>
        <dbReference type="Rhea" id="RHEA:23680"/>
        <dbReference type="ChEBI" id="CHEBI:15377"/>
        <dbReference type="ChEBI" id="CHEBI:15378"/>
        <dbReference type="ChEBI" id="CHEBI:43474"/>
        <dbReference type="ChEBI" id="CHEBI:57930"/>
        <dbReference type="ChEBI" id="CHEBI:61557"/>
        <dbReference type="EC" id="3.6.1.15"/>
    </reaction>
</comment>
<comment type="catalytic activity">
    <molecule>Protease-polymerase p76</molecule>
    <reaction evidence="6">
        <text>RNA(n) + a ribonucleoside 5'-triphosphate = RNA(n+1) + diphosphate</text>
        <dbReference type="Rhea" id="RHEA:21248"/>
        <dbReference type="Rhea" id="RHEA-COMP:14527"/>
        <dbReference type="Rhea" id="RHEA-COMP:17342"/>
        <dbReference type="ChEBI" id="CHEBI:33019"/>
        <dbReference type="ChEBI" id="CHEBI:61557"/>
        <dbReference type="ChEBI" id="CHEBI:140395"/>
        <dbReference type="EC" id="2.7.7.48"/>
    </reaction>
</comment>
<comment type="catalytic activity">
    <molecule>Protease-polymerase p76</molecule>
    <reaction evidence="8">
        <text>Endopeptidase with a preference for cleavage when the P1 position is occupied by Glu-|-Xaa and the P1' position is occupied by Gly-|-Yaa.</text>
        <dbReference type="EC" id="3.4.22.66"/>
    </reaction>
</comment>
<comment type="subunit">
    <molecule>NS2</molecule>
    <text evidence="13">Homodimer (PubMed:16432023). Interacts with NTPase, protein p30 and protease-polymerase p76 (PubMed:16432023).</text>
</comment>
<comment type="subunit">
    <molecule>Viral genome-linked protein</molecule>
    <text evidence="1 13">Interacts with capsid protein VP1 and protease-polymerase p76 (PubMed:16432023). Interacts with host IEF4e; this interaction plays a role in translation of viral proteins (By similarity).</text>
</comment>
<comment type="subunit">
    <molecule>Protease-polymerase p76</molecule>
    <text evidence="13">Homooligomer (PubMed:16432023). Interacts with Vpg, protein p32 and may interact with capsid protein VP1 (PubMed:16432023).</text>
</comment>
<comment type="subcellular location">
    <molecule>NS2</molecule>
    <subcellularLocation>
        <location evidence="18">Host endoplasmic reticulum membrane</location>
    </subcellularLocation>
</comment>
<comment type="subcellular location">
    <molecule>NS4</molecule>
    <subcellularLocation>
        <location evidence="18">Host endoplasmic reticulum membrane</location>
    </subcellularLocation>
</comment>
<comment type="subcellular location">
    <molecule>NTPase</molecule>
    <subcellularLocation>
        <location evidence="18">Host endoplasmic reticulum membrane</location>
    </subcellularLocation>
</comment>
<comment type="domain">
    <molecule>Viral genome-linked protein</molecule>
    <text evidence="1">Contains a compact core domain in the N-terminus half that is composed of a three-helix bundle.</text>
</comment>
<comment type="domain">
    <molecule>Protease-polymerase p76</molecule>
    <text evidence="17">Protease-polymerase is composed of two domains displaying two different catalytic activity. These activities may act independently.</text>
</comment>
<comment type="PTM">
    <molecule>Genome polyprotein</molecule>
    <text evidence="9 10">Specific enzymatic cleavages in vivo yield mature proteins (PubMed:10400760, PubMed:12072506). Pro-Pol is first autocatalytically cleaved, then processes the whole polyprotein (PubMed:10400760, PubMed:12072506).</text>
</comment>
<comment type="PTM">
    <molecule>Viral genome-linked protein</molecule>
    <text evidence="2">VPg is uridylylated by the polymerase and is covalently attached to the 5'-end of the polyadenylated genomic and subgenomic RNAs. This uridylylated form acts as a nucleotide-peptide primer for the polymerase.</text>
</comment>
<protein>
    <recommendedName>
        <fullName>Genome polyprotein</fullName>
    </recommendedName>
    <component>
        <recommendedName>
            <fullName>NS1</fullName>
        </recommendedName>
        <alternativeName>
            <fullName>Protein p5.6</fullName>
        </alternativeName>
    </component>
    <component>
        <recommendedName>
            <fullName>NS2</fullName>
        </recommendedName>
        <alternativeName>
            <fullName>Protein p32</fullName>
        </alternativeName>
    </component>
    <component>
        <recommendedName>
            <fullName>NTPase</fullName>
            <ecNumber evidence="3">3.6.1.15</ecNumber>
        </recommendedName>
        <alternativeName>
            <fullName evidence="17">NS3</fullName>
        </alternativeName>
        <alternativeName>
            <fullName>p39</fullName>
        </alternativeName>
    </component>
    <component>
        <recommendedName>
            <fullName evidence="17">NS4</fullName>
        </recommendedName>
        <alternativeName>
            <fullName evidence="17">3A-like protein p30</fullName>
        </alternativeName>
        <alternativeName>
            <fullName>Protein p30</fullName>
        </alternativeName>
    </component>
    <component>
        <recommendedName>
            <fullName>Viral genome-linked protein</fullName>
            <shortName>VPg</shortName>
        </recommendedName>
        <alternativeName>
            <fullName evidence="17">NS5</fullName>
        </alternativeName>
        <alternativeName>
            <fullName>p13</fullName>
        </alternativeName>
    </component>
    <component>
        <recommendedName>
            <fullName>Protease-polymerase p76</fullName>
            <shortName>Pro-Pol</shortName>
            <ecNumber evidence="4">2.7.7.48</ecNumber>
            <ecNumber evidence="5">3.4.22.66</ecNumber>
        </recommendedName>
        <alternativeName>
            <fullName evidence="17">NS6-7</fullName>
        </alternativeName>
    </component>
</protein>
<organismHost>
    <name type="scientific">Felis catus</name>
    <name type="common">Cat</name>
    <name type="synonym">Felis silvestris catus</name>
    <dbReference type="NCBI Taxonomy" id="9685"/>
</organismHost>
<sequence length="1763" mass="194911">MSQTLSFVLKTHSVRKDFVHSVKRTLQRRRDLQYLYNKLSRPIRAEACPSCASYDVCPNCTSGSIPDDGSSKGQIPSWEDVTKTSTYSLLLSEDTSDELHPDDLVNVAAHIRKALSTQSHPANVDMCKEQLTSLLVMAEAMLPQRSRSTLPLHQKYVAARLEWREKFFSKPLDFLLEKIGTSRDILQITAVWKIIIEKACYCKSYGEHWFEAAKQKLREIKSYEHNTLKPLIGAFIDGLRLMTIDNPNPMGFLPKLIGLIKPLNLAMIIDNHENTLSGWVITLTAIMELYNITECTIDVITSIITGFYDKIGKATKFYSQIKALFTGFRSEDVANSFWYMAAAILCYLITGLIPNNGRLSKIKACLAGATTLVSGIVATQKLAAMFATWNSESIVNELSARTVAISELNNPTTTSDTDSVERLLELAKILHEEIKIHTLNPIMQSYNPILRNLMSTLDGVITSCNKRKAIAKKRPVPVCYILTGPPGCGKTTAALALAKKLSDQEPSVINLDVDHHDTYTGNEVCIVDEFDSSDKVDYANFVIGMVNSAPMVLNCDMLENKGKLFTSKYIIMTSNSETPVKPSSRRAGAFYRRVTIIDVANPLAESHKRARPGTSVPRSCYKKNFSHLSLAKRGAECWCKEYVLDPKGLQHQSIKAPPPTFLNIDSLAQTMKQDFTLKNMAFEAENGHSEHRYGFVCQQGEVETVRRLLNAVRTRLNATFTVCVGSEASSSIGCTAHVLTPDEPFNGKKYVVSRCNEASLSALEGNCVQSALGVCMSTKDLTHLCHFIRGKIVNDSVRLDELPANQHVVTVNSVFDLAWALRRHLTLAGQFQAIRAAYDVLTAPDKVPAMLRHWMDETSFSDEHVVTQFVTPGGIVILESCGGARIWALGHNVIRAGGVTATPTGGCIRFMGLSAQTMPWSEIFRELFSLLGRIWSSIKVSTLVLTALGMYASRFRPKSEAKGKTKSKVGPYRGRGVALTDDEYDEWREHNATRKLDLSVEDFLMLRHRAALGADDADAVKFRSWWNSRSRLADDYEDVTVIGKGGVKHEKIRTNTLRAVDRGYDVSFAEESGPGTKFHKNAIGSVTDVCGEHKGYCVHMGHGVYATVAHVAKGDSFFLGERIFDLKTNGEFCCFRSTKILPSAAPFFPGKPTRDPWGSPVATEWKPKPYTTTSGKIVGCFATTSTETHPGDCGLPYIDDNGRVTGLHTGSGGPKTPSAKLVVPYVHIDMKTKSVTAQKYDVTKPDISYKGLICKQLDEIRIIPKGTRLHVSPAHTEDFEECSHQPASLGSGDPRCPKSLTAIVVDSLKPYCDKVEGPPHDILHRVQKMLIDHLSGFVPVNISSETSMLSAFHKLNHDTSCGPYLGGRKKDHMTNGEPDKPLLDLLSAKWKLATQGIALPHEYTIGLKDELRPVEKVAEGKRRMIWGCDVGVATVCAAAFKGVSDAITANHQYGPVQVGINMDSPSVEALHQRIKSAAKVYAVDYSKWDSTQSPRVSAASIDILRYFSDRSPIVDSAANTLKSPPIAIFNGVAVKVSSGLPSGMPLTSVINSLNHCLYVGCAILQSLEARGVPVTWNLFSTFDMMTYGDDGVYMFPMMFASVSDQIFANLSAYGLKPTRVDKSVGSIEPIDPESVVFLKRTITRTPQGIRGLLDRSSIIRQFYYIKGENSDDWKTPPKSIDPTSRGQQLWNACLYASQHGVEFYNKIYKLAQKAVEYEELHLEPPTYHSALEHYNNQFNGVEARSDQIDSSGMTALHCDVFEV</sequence>
<feature type="chain" id="PRO_0000341636" description="Genome polyprotein">
    <location>
        <begin position="1"/>
        <end position="1763"/>
    </location>
</feature>
<feature type="chain" id="PRO_0000036907" description="NS1">
    <location>
        <begin position="1"/>
        <end position="46"/>
    </location>
</feature>
<feature type="chain" id="PRO_0000036908" description="NS2">
    <location>
        <begin position="47"/>
        <end position="331"/>
    </location>
</feature>
<feature type="chain" id="PRO_0000036909" description="NTPase">
    <location>
        <begin position="332"/>
        <end position="685"/>
    </location>
</feature>
<feature type="chain" id="PRO_0000036910" description="NS4">
    <location>
        <begin position="686"/>
        <end position="960"/>
    </location>
</feature>
<feature type="chain" id="PRO_0000036911" description="Viral genome-linked protein">
    <location>
        <begin position="961"/>
        <end position="1071"/>
    </location>
</feature>
<feature type="chain" id="PRO_0000036912" description="Protease-polymerase p76">
    <location>
        <begin position="1072"/>
        <end position="1763"/>
    </location>
</feature>
<feature type="domain" description="SF3 helicase" evidence="7">
    <location>
        <begin position="458"/>
        <end position="614"/>
    </location>
</feature>
<feature type="domain" description="Peptidase C24" evidence="8">
    <location>
        <begin position="1073"/>
        <end position="1229"/>
    </location>
</feature>
<feature type="domain" description="RdRp catalytic" evidence="6">
    <location>
        <begin position="1478"/>
        <end position="1603"/>
    </location>
</feature>
<feature type="active site" description="For 3CLpro activity" evidence="8">
    <location>
        <position position="1110"/>
    </location>
</feature>
<feature type="active site" description="For 3CLpro activity" evidence="8">
    <location>
        <position position="1131"/>
    </location>
</feature>
<feature type="active site" description="For 3CLpro activity" evidence="8">
    <location>
        <position position="1193"/>
    </location>
</feature>
<feature type="binding site" evidence="7">
    <location>
        <begin position="484"/>
        <end position="491"/>
    </location>
    <ligand>
        <name>ATP</name>
        <dbReference type="ChEBI" id="CHEBI:30616"/>
    </ligand>
</feature>
<feature type="site" description="Cleavage; by Pro-Pol" evidence="16">
    <location>
        <begin position="46"/>
        <end position="47"/>
    </location>
</feature>
<feature type="site" description="Cleavage; by Pro-Pol" evidence="16">
    <location>
        <begin position="331"/>
        <end position="332"/>
    </location>
</feature>
<feature type="site" description="Cleavage; by Pro-Pol" evidence="16">
    <location>
        <begin position="685"/>
        <end position="686"/>
    </location>
</feature>
<feature type="site" description="Cleavage; by Pro-Pol" evidence="9">
    <location>
        <begin position="960"/>
        <end position="961"/>
    </location>
</feature>
<feature type="site" description="Cleavage; by Pro-Pol" evidence="9">
    <location>
        <begin position="1071"/>
        <end position="1072"/>
    </location>
</feature>
<feature type="modified residue" description="O-(5'-phospho-RNA)-tyrosine" evidence="1">
    <location>
        <position position="984"/>
    </location>
</feature>
<feature type="modified residue" description="Phosphothreonine" evidence="1">
    <location>
        <position position="1040"/>
    </location>
</feature>
<feature type="modified residue" description="Phosphoserine" evidence="1">
    <location>
        <position position="1067"/>
    </location>
</feature>
<feature type="mutagenesis site" description="Complete loss of proteolytic processing between P5.6 and P32; Complete loss of infectious clone recovery." evidence="10">
    <original>E</original>
    <variation>A</variation>
    <location>
        <position position="46"/>
    </location>
</feature>
<feature type="mutagenesis site" description="Complete loss of infectious clone recovery." evidence="10">
    <original>E</original>
    <variation>A</variation>
    <location>
        <position position="331"/>
    </location>
</feature>
<feature type="mutagenesis site" description="Complete loss of infectious clone recovery." evidence="10">
    <original>E</original>
    <variation>A</variation>
    <location>
        <position position="683"/>
    </location>
</feature>
<feature type="mutagenesis site" description="Complete loss of infectious clone recovery." evidence="10">
    <original>E</original>
    <variation>A</variation>
    <location>
        <position position="685"/>
    </location>
</feature>
<feature type="mutagenesis site" description="Complete loss of infectious clone recovery." evidence="10">
    <original>E</original>
    <variation>A</variation>
    <location>
        <position position="960"/>
    </location>
</feature>
<feature type="mutagenesis site" description="Complete loss of infectious clone recovery." evidence="10">
    <original>E</original>
    <variation>A</variation>
    <location>
        <position position="1071"/>
    </location>
</feature>
<feature type="mutagenesis site" description="Complete loss of proteolytic processing." evidence="9">
    <original>C</original>
    <variation>G</variation>
    <location>
        <position position="1193"/>
    </location>
</feature>
<feature type="mutagenesis site" description="No effect on infectious clone recovery." evidence="10">
    <original>E</original>
    <variation>A</variation>
    <location>
        <position position="1345"/>
    </location>
</feature>
<feature type="mutagenesis site" description="No effect on infectious clone recovery." evidence="10">
    <original>E</original>
    <variation>A</variation>
    <location>
        <position position="1419"/>
    </location>
</feature>
<evidence type="ECO:0000250" key="1">
    <source>
        <dbReference type="UniProtKB" id="P27409"/>
    </source>
</evidence>
<evidence type="ECO:0000250" key="2">
    <source>
        <dbReference type="UniProtKB" id="P54634"/>
    </source>
</evidence>
<evidence type="ECO:0000250" key="3">
    <source>
        <dbReference type="UniProtKB" id="Q04544"/>
    </source>
</evidence>
<evidence type="ECO:0000250" key="4">
    <source>
        <dbReference type="UniProtKB" id="Q69014"/>
    </source>
</evidence>
<evidence type="ECO:0000250" key="5">
    <source>
        <dbReference type="UniProtKB" id="Q6XDK8"/>
    </source>
</evidence>
<evidence type="ECO:0000255" key="6">
    <source>
        <dbReference type="PROSITE-ProRule" id="PRU00539"/>
    </source>
</evidence>
<evidence type="ECO:0000255" key="7">
    <source>
        <dbReference type="PROSITE-ProRule" id="PRU00551"/>
    </source>
</evidence>
<evidence type="ECO:0000255" key="8">
    <source>
        <dbReference type="PROSITE-ProRule" id="PRU01242"/>
    </source>
</evidence>
<evidence type="ECO:0000269" key="9">
    <source>
    </source>
</evidence>
<evidence type="ECO:0000269" key="10">
    <source>
    </source>
</evidence>
<evidence type="ECO:0000269" key="11">
    <source>
    </source>
</evidence>
<evidence type="ECO:0000269" key="12">
    <source>
    </source>
</evidence>
<evidence type="ECO:0000269" key="13">
    <source>
    </source>
</evidence>
<evidence type="ECO:0000269" key="14">
    <source>
    </source>
</evidence>
<evidence type="ECO:0000269" key="15">
    <source>
    </source>
</evidence>
<evidence type="ECO:0000303" key="16">
    <source>
    </source>
</evidence>
<evidence type="ECO:0000305" key="17"/>
<evidence type="ECO:0000305" key="18">
    <source>
    </source>
</evidence>